<accession>Q5R5H8</accession>
<organism>
    <name type="scientific">Pongo abelii</name>
    <name type="common">Sumatran orangutan</name>
    <name type="synonym">Pongo pygmaeus abelii</name>
    <dbReference type="NCBI Taxonomy" id="9601"/>
    <lineage>
        <taxon>Eukaryota</taxon>
        <taxon>Metazoa</taxon>
        <taxon>Chordata</taxon>
        <taxon>Craniata</taxon>
        <taxon>Vertebrata</taxon>
        <taxon>Euteleostomi</taxon>
        <taxon>Mammalia</taxon>
        <taxon>Eutheria</taxon>
        <taxon>Euarchontoglires</taxon>
        <taxon>Primates</taxon>
        <taxon>Haplorrhini</taxon>
        <taxon>Catarrhini</taxon>
        <taxon>Hominidae</taxon>
        <taxon>Pongo</taxon>
    </lineage>
</organism>
<sequence length="464" mass="51028">METEQPEETFPNTETNGEFGKRPAEDMEEEQAFKRSRNTDEMVELRILLQSKNAGAVIGKGGKNIKALRTDYNASVSVPDSSGPERILSISADIETIGEILKKIIPTLEEGLQLPSPTATSQLPLESDAVECLNYQHYKGSDFDCELRLLIHQSLAGGIIGVKGAKIKELRENTQTTIKLFQECCPHSTDRVVLIGGKPDRVVECIKIILDLISESPIKGRAQPYDPNFYDETYDYGGFTMMFDDRRGRPVGFPMRGRGGFDRMPPGRGGRPMPPSRRDYDDMSPRRGPPPPPPGRGGRGGSRARNLPLPPPPPPRGGDLMAYDRRGRPGDRYDGMVGFSADETWDSAIDTWSPSEWQMAYEPQGGSGYDYSYAGGRGSYGDLGGPIITTQVTIPKDLAGSIIGKGGQRIKQIRHESGASIKIDEPLEGSEDRIITITGTQDQIQNAQYLLQNSVKQYADVEGF</sequence>
<comment type="function">
    <text evidence="1 2">One of the major pre-mRNA-binding proteins. Binds tenaciously to poly(C) sequences. Likely to play a role in the nuclear metabolism of hnRNAs, particularly for pre-mRNAs that contain cytidine-rich sequences. Can also bind poly(C) single-stranded DNA. Plays an important role in p53/TP53 response to DNA damage, acting at the level of both transcription activation and repression. When sumoylated, acts as a transcriptional coactivator of p53/TP53, playing a role in p21/CDKN1A and 14-3-3 sigma/SFN induction. As far as transcription repression is concerned, acts by interacting with long intergenic RNA p21 (lincRNA-p21), a non-coding RNA induced by p53/TP53. This interaction is necessary for the induction of apoptosis, but not cell cycle arrest (By similarity). As part of a ribonucleoprotein complex composed at least of ZNF827, HNRNPL and the circular RNA circZNF827 that nucleates the complex on chromatin, may negatively regulate the transcription of genes involved in neuronal differentiation (By similarity).</text>
</comment>
<comment type="subunit">
    <text evidence="2 3 4">Identified in the spliceosome C complex. Interacts with ANKRD28, RBM42 and ZIK1. Interacts with DDX1. Interacts with MDM2; this interaction leads to ubiquitination and proteasomal degradation. Interacts with p53/TP53. Interacts with BRDT (By similarity). Interacts with IVNS1ABP (By similarity). Interacts with PPIA/CYPA (By similarity). Part of a transcription inhibitory ribonucleoprotein complex composed at least of the circular RNA circZNF827, ZNF827 and HNRNPL (By similarity).</text>
</comment>
<comment type="subcellular location">
    <subcellularLocation>
        <location evidence="2">Cytoplasm</location>
    </subcellularLocation>
    <subcellularLocation>
        <location evidence="2">Nucleus</location>
        <location evidence="2">Nucleoplasm</location>
    </subcellularLocation>
    <subcellularLocation>
        <location evidence="2">Cell projection</location>
        <location evidence="2">Podosome</location>
    </subcellularLocation>
</comment>
<comment type="PTM">
    <text evidence="1">Sumoylated by CBX4. Sumoylation is increased upon DNA damage, such as that produced by doxorubicin, etoposide, UV light and camptothecin, due to enhanced CBX4 phosphorylation by HIPK2 under these conditions (By similarity).</text>
</comment>
<comment type="PTM">
    <text evidence="1">Ubiquitinated by MDM2. Doxorubicin treatment does not affect monoubiquitination, but slightly decreases HNRNPK poly-ubiquitination (By similarity).</text>
</comment>
<comment type="PTM">
    <text evidence="1">O-glycosylated (O-GlcNAcylated), in a cell cycle-dependent manner.</text>
</comment>
<keyword id="KW-0007">Acetylation</keyword>
<keyword id="KW-0010">Activator</keyword>
<keyword id="KW-0965">Cell junction</keyword>
<keyword id="KW-0966">Cell projection</keyword>
<keyword id="KW-0963">Cytoplasm</keyword>
<keyword id="KW-0238">DNA-binding</keyword>
<keyword id="KW-0325">Glycoprotein</keyword>
<keyword id="KW-1017">Isopeptide bond</keyword>
<keyword id="KW-0488">Methylation</keyword>
<keyword id="KW-0507">mRNA processing</keyword>
<keyword id="KW-0508">mRNA splicing</keyword>
<keyword id="KW-0539">Nucleus</keyword>
<keyword id="KW-0597">Phosphoprotein</keyword>
<keyword id="KW-1185">Reference proteome</keyword>
<keyword id="KW-0677">Repeat</keyword>
<keyword id="KW-0678">Repressor</keyword>
<keyword id="KW-0687">Ribonucleoprotein</keyword>
<keyword id="KW-0694">RNA-binding</keyword>
<keyword id="KW-0747">Spliceosome</keyword>
<keyword id="KW-0804">Transcription</keyword>
<keyword id="KW-0805">Transcription regulation</keyword>
<keyword id="KW-0832">Ubl conjugation</keyword>
<name>HNRPK_PONAB</name>
<reference key="1">
    <citation type="submission" date="2004-11" db="EMBL/GenBank/DDBJ databases">
        <authorList>
            <consortium name="The German cDNA consortium"/>
        </authorList>
    </citation>
    <scope>NUCLEOTIDE SEQUENCE [LARGE SCALE MRNA]</scope>
    <source>
        <tissue>Kidney</tissue>
    </source>
</reference>
<evidence type="ECO:0000250" key="1"/>
<evidence type="ECO:0000250" key="2">
    <source>
        <dbReference type="UniProtKB" id="P61978"/>
    </source>
</evidence>
<evidence type="ECO:0000250" key="3">
    <source>
        <dbReference type="UniProtKB" id="P61979"/>
    </source>
</evidence>
<evidence type="ECO:0000250" key="4">
    <source>
        <dbReference type="UniProtKB" id="P61980"/>
    </source>
</evidence>
<evidence type="ECO:0000255" key="5">
    <source>
        <dbReference type="PROSITE-ProRule" id="PRU00117"/>
    </source>
</evidence>
<evidence type="ECO:0000256" key="6">
    <source>
        <dbReference type="SAM" id="MobiDB-lite"/>
    </source>
</evidence>
<protein>
    <recommendedName>
        <fullName>Heterogeneous nuclear ribonucleoprotein K</fullName>
        <shortName>hnRNP K</shortName>
    </recommendedName>
</protein>
<gene>
    <name type="primary">HNRNPK</name>
    <name type="synonym">HNRPK</name>
</gene>
<feature type="chain" id="PRO_0000288796" description="Heterogeneous nuclear ribonucleoprotein K">
    <location>
        <begin position="1"/>
        <end position="464"/>
    </location>
</feature>
<feature type="domain" description="KH 1" evidence="5">
    <location>
        <begin position="42"/>
        <end position="104"/>
    </location>
</feature>
<feature type="repeat" description="1-1">
    <location>
        <begin position="54"/>
        <end position="76"/>
    </location>
</feature>
<feature type="repeat" description="3-1">
    <location>
        <begin position="59"/>
        <end position="62"/>
    </location>
</feature>
<feature type="domain" description="KH 2" evidence="5">
    <location>
        <begin position="144"/>
        <end position="209"/>
    </location>
</feature>
<feature type="repeat" description="2-1">
    <location>
        <begin position="245"/>
        <end position="250"/>
    </location>
</feature>
<feature type="repeat" description="3-2">
    <location>
        <begin position="257"/>
        <end position="260"/>
    </location>
</feature>
<feature type="repeat" description="3-3">
    <location>
        <begin position="267"/>
        <end position="270"/>
    </location>
</feature>
<feature type="repeat" description="3-4">
    <location>
        <begin position="295"/>
        <end position="298"/>
    </location>
</feature>
<feature type="repeat" description="2-2">
    <location>
        <begin position="324"/>
        <end position="329"/>
    </location>
</feature>
<feature type="domain" description="KH 3" evidence="5">
    <location>
        <begin position="387"/>
        <end position="451"/>
    </location>
</feature>
<feature type="repeat" description="1-2">
    <location>
        <begin position="399"/>
        <end position="421"/>
    </location>
</feature>
<feature type="repeat" description="3-5">
    <location>
        <begin position="404"/>
        <end position="407"/>
    </location>
</feature>
<feature type="region of interest" description="Necessary for interaction with DDX1" evidence="1">
    <location>
        <begin position="1"/>
        <end position="276"/>
    </location>
</feature>
<feature type="region of interest" description="Disordered" evidence="6">
    <location>
        <begin position="1"/>
        <end position="37"/>
    </location>
</feature>
<feature type="region of interest" description="2 X 22 AA approximate repeats">
    <location>
        <begin position="54"/>
        <end position="421"/>
    </location>
</feature>
<feature type="region of interest" description="5 X 4 AA repeats of G-X-G-G">
    <location>
        <begin position="59"/>
        <end position="407"/>
    </location>
</feature>
<feature type="region of interest" description="RNA-binding RGG-box" evidence="1">
    <location>
        <begin position="236"/>
        <end position="273"/>
    </location>
</feature>
<feature type="region of interest" description="2 X 6 AA approximate repeats">
    <location>
        <begin position="245"/>
        <end position="329"/>
    </location>
</feature>
<feature type="region of interest" description="Disordered" evidence="6">
    <location>
        <begin position="250"/>
        <end position="329"/>
    </location>
</feature>
<feature type="compositionally biased region" description="Basic and acidic residues" evidence="6">
    <location>
        <begin position="19"/>
        <end position="37"/>
    </location>
</feature>
<feature type="compositionally biased region" description="Low complexity" evidence="6">
    <location>
        <begin position="252"/>
        <end position="266"/>
    </location>
</feature>
<feature type="compositionally biased region" description="Basic and acidic residues" evidence="6">
    <location>
        <begin position="276"/>
        <end position="285"/>
    </location>
</feature>
<feature type="modified residue" description="N-acetylmethionine" evidence="2">
    <location>
        <position position="1"/>
    </location>
</feature>
<feature type="modified residue" description="N6-acetyllysine; alternate" evidence="3">
    <location>
        <position position="34"/>
    </location>
</feature>
<feature type="modified residue" description="Phosphoserine" evidence="2">
    <location>
        <position position="36"/>
    </location>
</feature>
<feature type="modified residue" description="Phosphothreonine" evidence="3">
    <location>
        <position position="39"/>
    </location>
</feature>
<feature type="modified residue" description="Phosphoserine" evidence="2">
    <location>
        <position position="75"/>
    </location>
</feature>
<feature type="modified residue" description="Phosphoserine" evidence="2">
    <location>
        <position position="116"/>
    </location>
</feature>
<feature type="modified residue" description="N6-acetyllysine" evidence="3">
    <location>
        <position position="198"/>
    </location>
</feature>
<feature type="modified residue" description="Phosphoserine" evidence="2">
    <location>
        <position position="214"/>
    </location>
</feature>
<feature type="modified residue" description="Phosphoserine" evidence="2">
    <location>
        <position position="216"/>
    </location>
</feature>
<feature type="modified residue" description="N6-succinyllysine; alternate" evidence="3">
    <location>
        <position position="219"/>
    </location>
</feature>
<feature type="modified residue" description="Phosphoserine" evidence="2">
    <location>
        <position position="284"/>
    </location>
</feature>
<feature type="modified residue" description="Omega-N-methylarginine" evidence="2">
    <location>
        <position position="316"/>
    </location>
</feature>
<feature type="modified residue" description="Omega-N-methylarginine" evidence="3">
    <location>
        <position position="377"/>
    </location>
</feature>
<feature type="modified residue" description="Phosphoserine" evidence="2">
    <location>
        <position position="379"/>
    </location>
</feature>
<feature type="modified residue" description="Phosphotyrosine" evidence="2">
    <location>
        <position position="380"/>
    </location>
</feature>
<feature type="modified residue" description="N6-acetyllysine; alternate" evidence="3">
    <location>
        <position position="405"/>
    </location>
</feature>
<feature type="modified residue" description="Phosphoserine" evidence="2">
    <location>
        <position position="420"/>
    </location>
</feature>
<feature type="cross-link" description="Glycyl lysine isopeptide (Lys-Gly) (interchain with G-Cter in SUMO1); alternate" evidence="2">
    <location>
        <position position="34"/>
    </location>
</feature>
<feature type="cross-link" description="Glycyl lysine isopeptide (Lys-Gly) (interchain with G-Cter in SUMO2); alternate" evidence="2">
    <location>
        <position position="34"/>
    </location>
</feature>
<feature type="cross-link" description="Glycyl lysine isopeptide (Lys-Gly) (interchain with G-Cter in SUMO2)" evidence="2">
    <location>
        <position position="52"/>
    </location>
</feature>
<feature type="cross-link" description="Glycyl lysine isopeptide (Lys-Gly) (interchain with G-Cter in SUMO2)" evidence="2">
    <location>
        <position position="60"/>
    </location>
</feature>
<feature type="cross-link" description="Glycyl lysine isopeptide (Lys-Gly) (interchain with G-Cter in SUMO1); alternate" evidence="2">
    <location>
        <position position="163"/>
    </location>
</feature>
<feature type="cross-link" description="Glycyl lysine isopeptide (Lys-Gly) (interchain with G-Cter in SUMO2); alternate" evidence="2">
    <location>
        <position position="163"/>
    </location>
</feature>
<feature type="cross-link" description="Glycyl lysine isopeptide (Lys-Gly) (interchain with G-Cter in SUMO2); alternate" evidence="2">
    <location>
        <position position="219"/>
    </location>
</feature>
<feature type="cross-link" description="Glycyl lysine isopeptide (Lys-Gly) (interchain with G-Cter in SUMO2); alternate" evidence="2">
    <location>
        <position position="405"/>
    </location>
</feature>
<feature type="cross-link" description="Glycyl lysine isopeptide (Lys-Gly) (interchain with G-Cter in SUMO); alternate" evidence="1">
    <location>
        <position position="422"/>
    </location>
</feature>
<feature type="cross-link" description="Glycyl lysine isopeptide (Lys-Gly) (interchain with G-Cter in SUMO1); alternate" evidence="2">
    <location>
        <position position="422"/>
    </location>
</feature>
<feature type="cross-link" description="Glycyl lysine isopeptide (Lys-Gly) (interchain with G-Cter in SUMO2); alternate" evidence="2">
    <location>
        <position position="422"/>
    </location>
</feature>
<dbReference type="EMBL" id="CR860881">
    <property type="protein sequence ID" value="CAH92988.1"/>
    <property type="molecule type" value="mRNA"/>
</dbReference>
<dbReference type="RefSeq" id="NP_001126766.1">
    <property type="nucleotide sequence ID" value="NM_001133294.1"/>
</dbReference>
<dbReference type="SMR" id="Q5R5H8"/>
<dbReference type="FunCoup" id="Q5R5H8">
    <property type="interactions" value="3735"/>
</dbReference>
<dbReference type="STRING" id="9601.ENSPPYP00000021658"/>
<dbReference type="Ensembl" id="ENSPPYT00000043813.1">
    <property type="protein sequence ID" value="ENSPPYP00000042055.1"/>
    <property type="gene ID" value="ENSPPYG00000019327.3"/>
</dbReference>
<dbReference type="GeneID" id="100173769"/>
<dbReference type="KEGG" id="pon:100173769"/>
<dbReference type="CTD" id="3190"/>
<dbReference type="eggNOG" id="KOG2192">
    <property type="taxonomic scope" value="Eukaryota"/>
</dbReference>
<dbReference type="GeneTree" id="ENSGT00940000153434"/>
<dbReference type="HOGENOM" id="CLU_022670_5_1_1"/>
<dbReference type="InParanoid" id="Q5R5H8"/>
<dbReference type="OrthoDB" id="1937934at2759"/>
<dbReference type="TreeFam" id="TF316335"/>
<dbReference type="Proteomes" id="UP000001595">
    <property type="component" value="Chromosome 9"/>
</dbReference>
<dbReference type="GO" id="GO:0070161">
    <property type="term" value="C:anchoring junction"/>
    <property type="evidence" value="ECO:0007669"/>
    <property type="project" value="UniProtKB-KW"/>
</dbReference>
<dbReference type="GO" id="GO:0042995">
    <property type="term" value="C:cell projection"/>
    <property type="evidence" value="ECO:0007669"/>
    <property type="project" value="UniProtKB-KW"/>
</dbReference>
<dbReference type="GO" id="GO:0000785">
    <property type="term" value="C:chromatin"/>
    <property type="evidence" value="ECO:0000250"/>
    <property type="project" value="UniProtKB"/>
</dbReference>
<dbReference type="GO" id="GO:0005737">
    <property type="term" value="C:cytoplasm"/>
    <property type="evidence" value="ECO:0000250"/>
    <property type="project" value="UniProtKB"/>
</dbReference>
<dbReference type="GO" id="GO:0005654">
    <property type="term" value="C:nucleoplasm"/>
    <property type="evidence" value="ECO:0007669"/>
    <property type="project" value="UniProtKB-SubCell"/>
</dbReference>
<dbReference type="GO" id="GO:0005634">
    <property type="term" value="C:nucleus"/>
    <property type="evidence" value="ECO:0000250"/>
    <property type="project" value="UniProtKB"/>
</dbReference>
<dbReference type="GO" id="GO:0002102">
    <property type="term" value="C:podosome"/>
    <property type="evidence" value="ECO:0007669"/>
    <property type="project" value="UniProtKB-SubCell"/>
</dbReference>
<dbReference type="GO" id="GO:1990904">
    <property type="term" value="C:ribonucleoprotein complex"/>
    <property type="evidence" value="ECO:0000250"/>
    <property type="project" value="UniProtKB"/>
</dbReference>
<dbReference type="GO" id="GO:0005681">
    <property type="term" value="C:spliceosomal complex"/>
    <property type="evidence" value="ECO:0007669"/>
    <property type="project" value="UniProtKB-KW"/>
</dbReference>
<dbReference type="GO" id="GO:0003677">
    <property type="term" value="F:DNA binding"/>
    <property type="evidence" value="ECO:0007669"/>
    <property type="project" value="UniProtKB-KW"/>
</dbReference>
<dbReference type="GO" id="GO:0003723">
    <property type="term" value="F:RNA binding"/>
    <property type="evidence" value="ECO:0007669"/>
    <property type="project" value="UniProtKB-KW"/>
</dbReference>
<dbReference type="GO" id="GO:0006397">
    <property type="term" value="P:mRNA processing"/>
    <property type="evidence" value="ECO:0007669"/>
    <property type="project" value="UniProtKB-KW"/>
</dbReference>
<dbReference type="GO" id="GO:0045892">
    <property type="term" value="P:negative regulation of DNA-templated transcription"/>
    <property type="evidence" value="ECO:0000250"/>
    <property type="project" value="UniProtKB"/>
</dbReference>
<dbReference type="GO" id="GO:0008380">
    <property type="term" value="P:RNA splicing"/>
    <property type="evidence" value="ECO:0007669"/>
    <property type="project" value="UniProtKB-KW"/>
</dbReference>
<dbReference type="CDD" id="cd22432">
    <property type="entry name" value="KH-I_HNRNPK_rpt1"/>
    <property type="match status" value="1"/>
</dbReference>
<dbReference type="CDD" id="cd22433">
    <property type="entry name" value="KH-I_HNRNPK_rpt2"/>
    <property type="match status" value="1"/>
</dbReference>
<dbReference type="CDD" id="cd22434">
    <property type="entry name" value="KH-I_HNRNPK_rpt3"/>
    <property type="match status" value="1"/>
</dbReference>
<dbReference type="FunFam" id="3.30.1370.10:FF:000021">
    <property type="entry name" value="Heterogeneous nuclear ribonucleoprotein K, like"/>
    <property type="match status" value="1"/>
</dbReference>
<dbReference type="FunFam" id="3.30.1370.10:FF:000023">
    <property type="entry name" value="Heterogeneous nuclear ribonucleoprotein K, like"/>
    <property type="match status" value="1"/>
</dbReference>
<dbReference type="FunFam" id="3.30.1370.10:FF:000025">
    <property type="entry name" value="Heterogeneous nuclear ribonucleoprotein K, like"/>
    <property type="match status" value="1"/>
</dbReference>
<dbReference type="Gene3D" id="3.30.1370.10">
    <property type="entry name" value="K Homology domain, type 1"/>
    <property type="match status" value="3"/>
</dbReference>
<dbReference type="InterPro" id="IPR004087">
    <property type="entry name" value="KH_dom"/>
</dbReference>
<dbReference type="InterPro" id="IPR004088">
    <property type="entry name" value="KH_dom_type_1"/>
</dbReference>
<dbReference type="InterPro" id="IPR036612">
    <property type="entry name" value="KH_dom_type_1_sf"/>
</dbReference>
<dbReference type="InterPro" id="IPR012987">
    <property type="entry name" value="ROK_N"/>
</dbReference>
<dbReference type="PANTHER" id="PTHR10288">
    <property type="entry name" value="KH DOMAIN CONTAINING RNA BINDING PROTEIN"/>
    <property type="match status" value="1"/>
</dbReference>
<dbReference type="Pfam" id="PF00013">
    <property type="entry name" value="KH_1"/>
    <property type="match status" value="3"/>
</dbReference>
<dbReference type="Pfam" id="PF08067">
    <property type="entry name" value="ROKNT"/>
    <property type="match status" value="1"/>
</dbReference>
<dbReference type="SMART" id="SM00322">
    <property type="entry name" value="KH"/>
    <property type="match status" value="3"/>
</dbReference>
<dbReference type="SUPFAM" id="SSF54791">
    <property type="entry name" value="Eukaryotic type KH-domain (KH-domain type I)"/>
    <property type="match status" value="3"/>
</dbReference>
<dbReference type="PROSITE" id="PS50084">
    <property type="entry name" value="KH_TYPE_1"/>
    <property type="match status" value="3"/>
</dbReference>
<proteinExistence type="evidence at transcript level"/>